<reference key="1">
    <citation type="journal article" date="1991" name="Virology">
        <title>First field isolation of wound tumor virus from a plant host: minimal sequence divergence from the type strain isolated from an insect vector.</title>
        <authorList>
            <person name="Hillman B.I."/>
            <person name="Anzola J.V."/>
            <person name="Halpern B.T."/>
            <person name="Cavileer T.D."/>
            <person name="Nuss D.L."/>
        </authorList>
    </citation>
    <scope>NUCLEOTIDE SEQUENCE [MRNA]</scope>
</reference>
<dbReference type="EMBL" id="M77021">
    <property type="protein sequence ID" value="AAA48501.1"/>
    <property type="molecule type" value="mRNA"/>
</dbReference>
<dbReference type="PIR" id="A41705">
    <property type="entry name" value="MNXR12"/>
</dbReference>
<dbReference type="GO" id="GO:0030430">
    <property type="term" value="C:host cell cytoplasm"/>
    <property type="evidence" value="ECO:0007669"/>
    <property type="project" value="UniProtKB-SubCell"/>
</dbReference>
<dbReference type="GO" id="GO:0003723">
    <property type="term" value="F:RNA binding"/>
    <property type="evidence" value="ECO:0007669"/>
    <property type="project" value="UniProtKB-KW"/>
</dbReference>
<dbReference type="InterPro" id="IPR035351">
    <property type="entry name" value="Pns11/12"/>
</dbReference>
<dbReference type="Pfam" id="PF17464">
    <property type="entry name" value="Pns11_12"/>
    <property type="match status" value="1"/>
</dbReference>
<name>NSP11_WTVNJ</name>
<evidence type="ECO:0000250" key="1"/>
<evidence type="ECO:0000256" key="2">
    <source>
        <dbReference type="SAM" id="MobiDB-lite"/>
    </source>
</evidence>
<evidence type="ECO:0000305" key="3"/>
<accession>P31612</accession>
<sequence>MSNKESNVALQTLRVTKDMKDFLSHRIVGEPPANIKIEYQKIHRYRTCVCPSTGHISELCPSGDLILSLGAHRNVIAAATVYDVVKNKTKSTTSKAGTSSTLSSLGLSGFQKPKIGSKNKKTMFSKQNNSTNESDESEGEEGSSLNDLPKSDLINAIMELASQGRNNSKGKGRRGGKR</sequence>
<keyword id="KW-1035">Host cytoplasm</keyword>
<keyword id="KW-0694">RNA-binding</keyword>
<organism>
    <name type="scientific">Wound tumor virus (strain NJ)</name>
    <name type="common">WTV</name>
    <dbReference type="NCBI Taxonomy" id="31595"/>
    <lineage>
        <taxon>Viruses</taxon>
        <taxon>Riboviria</taxon>
        <taxon>Orthornavirae</taxon>
        <taxon>Duplornaviricota</taxon>
        <taxon>Resentoviricetes</taxon>
        <taxon>Reovirales</taxon>
        <taxon>Sedoreoviridae</taxon>
        <taxon>Phytoreovirus</taxon>
        <taxon>Wound tumor virus</taxon>
    </lineage>
</organism>
<proteinExistence type="evidence at transcript level"/>
<feature type="chain" id="PRO_0000222776" description="RNA-binding protein">
    <location>
        <begin position="1"/>
        <end position="178"/>
    </location>
</feature>
<feature type="region of interest" description="Disordered" evidence="2">
    <location>
        <begin position="108"/>
        <end position="178"/>
    </location>
</feature>
<feature type="compositionally biased region" description="Basic residues" evidence="2">
    <location>
        <begin position="168"/>
        <end position="178"/>
    </location>
</feature>
<protein>
    <recommendedName>
        <fullName>RNA-binding protein</fullName>
    </recommendedName>
    <alternativeName>
        <fullName>Non-structural protein 12</fullName>
        <shortName>Pns12</shortName>
    </alternativeName>
</protein>
<comment type="function">
    <text evidence="1">Constituent of viral factories. Binds to ssRNA and dsRNA (By similarity).</text>
</comment>
<comment type="subcellular location">
    <subcellularLocation>
        <location evidence="1">Host cytoplasm</location>
    </subcellularLocation>
    <text evidence="1">Constituent of spherical cytoplasmic structures, called virus factories, that appear early after infection and are the site of viral replication and packaging.</text>
</comment>
<comment type="similarity">
    <text evidence="3">Belongs to the phytoreovirus RNA-binding protein family.</text>
</comment>
<organismHost>
    <name type="scientific">Catharanthus roseus</name>
    <name type="common">Madagascar periwinkle</name>
    <name type="synonym">Vinca rosea</name>
    <dbReference type="NCBI Taxonomy" id="4058"/>
</organismHost>
<organismHost>
    <name type="scientific">Melilotus officinalis</name>
    <name type="common">Yellow sweet clover</name>
    <name type="synonym">Trifolium officinale</name>
    <dbReference type="NCBI Taxonomy" id="47083"/>
</organismHost>
<organismHost>
    <name type="scientific">Trifolium incarnatum</name>
    <name type="common">Crimson clover</name>
    <dbReference type="NCBI Taxonomy" id="60916"/>
</organismHost>